<proteinExistence type="evidence at transcript level"/>
<comment type="function">
    <text evidence="3">GDP-mannose transporter that may be involved in the import of GDP-mannose from the cytoplasm into the Golgi lumen.</text>
</comment>
<comment type="subcellular location">
    <subcellularLocation>
        <location evidence="5">Golgi apparatus membrane</location>
        <topology evidence="5">Multi-pass membrane protein</topology>
    </subcellularLocation>
</comment>
<comment type="tissue specificity">
    <text evidence="3">Expressed in rosette leaves, stems, flowers and siliques.</text>
</comment>
<comment type="similarity">
    <text evidence="5">Belongs to the nucleotide-sugar transporter family. GDP-Mannose:GMP antiporter (GMA) (TC 2.A.7.13) subfamily.</text>
</comment>
<feature type="chain" id="PRO_0000406122" description="GDP-mannose transporter GONST3">
    <location>
        <begin position="1"/>
        <end position="372"/>
    </location>
</feature>
<feature type="transmembrane region" description="Helical" evidence="1">
    <location>
        <begin position="33"/>
        <end position="53"/>
    </location>
</feature>
<feature type="transmembrane region" description="Helical" evidence="1">
    <location>
        <begin position="60"/>
        <end position="80"/>
    </location>
</feature>
<feature type="transmembrane region" description="Helical" evidence="1">
    <location>
        <begin position="92"/>
        <end position="112"/>
    </location>
</feature>
<feature type="transmembrane region" description="Helical" evidence="1">
    <location>
        <begin position="125"/>
        <end position="145"/>
    </location>
</feature>
<feature type="transmembrane region" description="Helical" evidence="1">
    <location>
        <begin position="155"/>
        <end position="175"/>
    </location>
</feature>
<feature type="transmembrane region" description="Helical" evidence="1">
    <location>
        <begin position="177"/>
        <end position="197"/>
    </location>
</feature>
<feature type="transmembrane region" description="Helical" evidence="1">
    <location>
        <begin position="209"/>
        <end position="229"/>
    </location>
</feature>
<feature type="transmembrane region" description="Helical" evidence="1">
    <location>
        <begin position="251"/>
        <end position="271"/>
    </location>
</feature>
<feature type="transmembrane region" description="Helical" evidence="1">
    <location>
        <begin position="280"/>
        <end position="300"/>
    </location>
</feature>
<feature type="transmembrane region" description="Helical" evidence="1">
    <location>
        <begin position="303"/>
        <end position="323"/>
    </location>
</feature>
<feature type="region of interest" description="Disordered" evidence="2">
    <location>
        <begin position="331"/>
        <end position="372"/>
    </location>
</feature>
<feature type="compositionally biased region" description="Basic and acidic residues" evidence="2">
    <location>
        <begin position="346"/>
        <end position="372"/>
    </location>
</feature>
<accession>Q9S845</accession>
<gene>
    <name evidence="8" type="primary">GONST3</name>
    <name evidence="6" type="ordered locus">At1g76340</name>
    <name evidence="7" type="ORF">F15M4.16</name>
</gene>
<reference key="1">
    <citation type="journal article" date="2004" name="Mol. Genet. Genomics">
        <title>Arabidopsis thaliana expresses multiple Golgi-localised nucleotide-sugar transporters related to GONST1.</title>
        <authorList>
            <person name="Handford M.G."/>
            <person name="Sicilia F."/>
            <person name="Brandizzi F."/>
            <person name="Chung J.H."/>
            <person name="Dupree P."/>
        </authorList>
    </citation>
    <scope>NUCLEOTIDE SEQUENCE [MRNA]</scope>
    <scope>FUNCTION</scope>
    <scope>TISSUE SPECIFICITY</scope>
    <source>
        <strain>cv. Columbia</strain>
    </source>
</reference>
<reference key="2">
    <citation type="journal article" date="2000" name="Nature">
        <title>Sequence and analysis of chromosome 1 of the plant Arabidopsis thaliana.</title>
        <authorList>
            <person name="Theologis A."/>
            <person name="Ecker J.R."/>
            <person name="Palm C.J."/>
            <person name="Federspiel N.A."/>
            <person name="Kaul S."/>
            <person name="White O."/>
            <person name="Alonso J."/>
            <person name="Altafi H."/>
            <person name="Araujo R."/>
            <person name="Bowman C.L."/>
            <person name="Brooks S.Y."/>
            <person name="Buehler E."/>
            <person name="Chan A."/>
            <person name="Chao Q."/>
            <person name="Chen H."/>
            <person name="Cheuk R.F."/>
            <person name="Chin C.W."/>
            <person name="Chung M.K."/>
            <person name="Conn L."/>
            <person name="Conway A.B."/>
            <person name="Conway A.R."/>
            <person name="Creasy T.H."/>
            <person name="Dewar K."/>
            <person name="Dunn P."/>
            <person name="Etgu P."/>
            <person name="Feldblyum T.V."/>
            <person name="Feng J.-D."/>
            <person name="Fong B."/>
            <person name="Fujii C.Y."/>
            <person name="Gill J.E."/>
            <person name="Goldsmith A.D."/>
            <person name="Haas B."/>
            <person name="Hansen N.F."/>
            <person name="Hughes B."/>
            <person name="Huizar L."/>
            <person name="Hunter J.L."/>
            <person name="Jenkins J."/>
            <person name="Johnson-Hopson C."/>
            <person name="Khan S."/>
            <person name="Khaykin E."/>
            <person name="Kim C.J."/>
            <person name="Koo H.L."/>
            <person name="Kremenetskaia I."/>
            <person name="Kurtz D.B."/>
            <person name="Kwan A."/>
            <person name="Lam B."/>
            <person name="Langin-Hooper S."/>
            <person name="Lee A."/>
            <person name="Lee J.M."/>
            <person name="Lenz C.A."/>
            <person name="Li J.H."/>
            <person name="Li Y.-P."/>
            <person name="Lin X."/>
            <person name="Liu S.X."/>
            <person name="Liu Z.A."/>
            <person name="Luros J.S."/>
            <person name="Maiti R."/>
            <person name="Marziali A."/>
            <person name="Militscher J."/>
            <person name="Miranda M."/>
            <person name="Nguyen M."/>
            <person name="Nierman W.C."/>
            <person name="Osborne B.I."/>
            <person name="Pai G."/>
            <person name="Peterson J."/>
            <person name="Pham P.K."/>
            <person name="Rizzo M."/>
            <person name="Rooney T."/>
            <person name="Rowley D."/>
            <person name="Sakano H."/>
            <person name="Salzberg S.L."/>
            <person name="Schwartz J.R."/>
            <person name="Shinn P."/>
            <person name="Southwick A.M."/>
            <person name="Sun H."/>
            <person name="Tallon L.J."/>
            <person name="Tambunga G."/>
            <person name="Toriumi M.J."/>
            <person name="Town C.D."/>
            <person name="Utterback T."/>
            <person name="Van Aken S."/>
            <person name="Vaysberg M."/>
            <person name="Vysotskaia V.S."/>
            <person name="Walker M."/>
            <person name="Wu D."/>
            <person name="Yu G."/>
            <person name="Fraser C.M."/>
            <person name="Venter J.C."/>
            <person name="Davis R.W."/>
        </authorList>
    </citation>
    <scope>NUCLEOTIDE SEQUENCE [LARGE SCALE GENOMIC DNA]</scope>
    <source>
        <strain>cv. Columbia</strain>
        <tissue>Callus</tissue>
    </source>
</reference>
<reference key="3">
    <citation type="journal article" date="2017" name="Plant J.">
        <title>Araport11: a complete reannotation of the Arabidopsis thaliana reference genome.</title>
        <authorList>
            <person name="Cheng C.Y."/>
            <person name="Krishnakumar V."/>
            <person name="Chan A.P."/>
            <person name="Thibaud-Nissen F."/>
            <person name="Schobel S."/>
            <person name="Town C.D."/>
        </authorList>
    </citation>
    <scope>GENOME REANNOTATION</scope>
    <source>
        <strain>cv. Columbia</strain>
    </source>
</reference>
<reference key="4">
    <citation type="journal article" date="2014" name="Proc. Natl. Acad. Sci. U.S.A.">
        <title>The Golgi localized bifunctional UDP-rhamnose/UDP-galactose transporter family of Arabidopsis.</title>
        <authorList>
            <person name="Rautengarten C."/>
            <person name="Ebert B."/>
            <person name="Moreno I."/>
            <person name="Temple H."/>
            <person name="Herter T."/>
            <person name="Link B."/>
            <person name="Donas-Cofre D."/>
            <person name="Moreno A."/>
            <person name="Saez-Aguayo S."/>
            <person name="Blanco F."/>
            <person name="Mortimer J.C."/>
            <person name="Schultink A."/>
            <person name="Reiter W.D."/>
            <person name="Dupree P."/>
            <person name="Pauly M."/>
            <person name="Heazlewood J.L."/>
            <person name="Scheller H.V."/>
            <person name="Orellana A."/>
        </authorList>
    </citation>
    <scope>GENE FAMILY</scope>
</reference>
<sequence length="372" mass="41740">MSTNDEENGTVIEVKNVPEPSPETWYSVFLRQASVYGVAAGYCLSASLLSIINKWAIMKFPYPGALTAMQYFTSAAGVLLCAQMKLIEHDSLNLLTMWRFLPAAMIFYLSLFTNSELLLHANVDTFIVFRSAVPIFVAIGETLFLHQPWPSVKTWGSLATIFGGSLLYVFTDYQFTIAAYSWALAYLVSMTIDFVYIKHVVMTIGLNTWGLVLYNNLEALLLFPLELLIMGELKKIKHEITDETDWYSLQVVLPVGLSCLFGLAISFFGFSCRRAISATGFTVLGIVNKLLTVVINLMVWDKHSTFVGTLGLLVCMFGGVMYQQSTIKKPNATQEAKPQEQDEEQEKLLEMQENKESNSVDIKETLKSEEKL</sequence>
<dbReference type="EMBL" id="AJ551326">
    <property type="protein sequence ID" value="CAD83087.1"/>
    <property type="molecule type" value="mRNA"/>
</dbReference>
<dbReference type="EMBL" id="AC009978">
    <property type="protein sequence ID" value="AAF17634.1"/>
    <property type="molecule type" value="Genomic_DNA"/>
</dbReference>
<dbReference type="EMBL" id="AC012394">
    <property type="protein sequence ID" value="AAF16667.1"/>
    <property type="molecule type" value="Genomic_DNA"/>
</dbReference>
<dbReference type="EMBL" id="CP002684">
    <property type="protein sequence ID" value="AEE35826.1"/>
    <property type="molecule type" value="Genomic_DNA"/>
</dbReference>
<dbReference type="PIR" id="H96790">
    <property type="entry name" value="H96790"/>
</dbReference>
<dbReference type="RefSeq" id="NP_177760.1">
    <property type="nucleotide sequence ID" value="NM_106283.3"/>
</dbReference>
<dbReference type="SMR" id="Q9S845"/>
<dbReference type="FunCoup" id="Q9S845">
    <property type="interactions" value="871"/>
</dbReference>
<dbReference type="STRING" id="3702.Q9S845"/>
<dbReference type="TCDB" id="2.A.7.13.5">
    <property type="family name" value="the drug/metabolite transporter (dmt) superfamily"/>
</dbReference>
<dbReference type="PaxDb" id="3702-AT1G76340.1"/>
<dbReference type="ProteomicsDB" id="248446"/>
<dbReference type="EnsemblPlants" id="AT1G76340.1">
    <property type="protein sequence ID" value="AT1G76340.1"/>
    <property type="gene ID" value="AT1G76340"/>
</dbReference>
<dbReference type="GeneID" id="843966"/>
<dbReference type="Gramene" id="AT1G76340.1">
    <property type="protein sequence ID" value="AT1G76340.1"/>
    <property type="gene ID" value="AT1G76340"/>
</dbReference>
<dbReference type="KEGG" id="ath:AT1G76340"/>
<dbReference type="Araport" id="AT1G76340"/>
<dbReference type="TAIR" id="AT1G76340">
    <property type="gene designation" value="GONST3"/>
</dbReference>
<dbReference type="eggNOG" id="KOG1444">
    <property type="taxonomic scope" value="Eukaryota"/>
</dbReference>
<dbReference type="HOGENOM" id="CLU_045047_1_0_1"/>
<dbReference type="InParanoid" id="Q9S845"/>
<dbReference type="OMA" id="MSYFAWM"/>
<dbReference type="OrthoDB" id="417037at2759"/>
<dbReference type="PhylomeDB" id="Q9S845"/>
<dbReference type="PRO" id="PR:Q9S845"/>
<dbReference type="Proteomes" id="UP000006548">
    <property type="component" value="Chromosome 1"/>
</dbReference>
<dbReference type="ExpressionAtlas" id="Q9S845">
    <property type="expression patterns" value="baseline and differential"/>
</dbReference>
<dbReference type="GO" id="GO:0000139">
    <property type="term" value="C:Golgi membrane"/>
    <property type="evidence" value="ECO:0000314"/>
    <property type="project" value="TAIR"/>
</dbReference>
<dbReference type="GO" id="GO:0015297">
    <property type="term" value="F:antiporter activity"/>
    <property type="evidence" value="ECO:0007669"/>
    <property type="project" value="UniProtKB-KW"/>
</dbReference>
<dbReference type="GO" id="GO:0005338">
    <property type="term" value="F:nucleotide-sugar transmembrane transporter activity"/>
    <property type="evidence" value="ECO:0000315"/>
    <property type="project" value="TAIR"/>
</dbReference>
<dbReference type="GO" id="GO:0015780">
    <property type="term" value="P:nucleotide-sugar transmembrane transport"/>
    <property type="evidence" value="ECO:0000316"/>
    <property type="project" value="TAIR"/>
</dbReference>
<dbReference type="InterPro" id="IPR004853">
    <property type="entry name" value="Sugar_P_trans_dom"/>
</dbReference>
<dbReference type="InterPro" id="IPR050186">
    <property type="entry name" value="TPT_transporter"/>
</dbReference>
<dbReference type="PANTHER" id="PTHR11132">
    <property type="entry name" value="SOLUTE CARRIER FAMILY 35"/>
    <property type="match status" value="1"/>
</dbReference>
<dbReference type="Pfam" id="PF03151">
    <property type="entry name" value="TPT"/>
    <property type="match status" value="1"/>
</dbReference>
<name>GONS3_ARATH</name>
<evidence type="ECO:0000255" key="1"/>
<evidence type="ECO:0000256" key="2">
    <source>
        <dbReference type="SAM" id="MobiDB-lite"/>
    </source>
</evidence>
<evidence type="ECO:0000269" key="3">
    <source>
    </source>
</evidence>
<evidence type="ECO:0000303" key="4">
    <source>
    </source>
</evidence>
<evidence type="ECO:0000305" key="5"/>
<evidence type="ECO:0000312" key="6">
    <source>
        <dbReference type="Araport" id="AT1G76340"/>
    </source>
</evidence>
<evidence type="ECO:0000312" key="7">
    <source>
        <dbReference type="EMBL" id="AAF17634.1"/>
    </source>
</evidence>
<evidence type="ECO:0000312" key="8">
    <source>
        <dbReference type="EMBL" id="CAD83087.1"/>
    </source>
</evidence>
<keyword id="KW-0050">Antiport</keyword>
<keyword id="KW-0333">Golgi apparatus</keyword>
<keyword id="KW-0472">Membrane</keyword>
<keyword id="KW-1185">Reference proteome</keyword>
<keyword id="KW-0762">Sugar transport</keyword>
<keyword id="KW-0812">Transmembrane</keyword>
<keyword id="KW-1133">Transmembrane helix</keyword>
<keyword id="KW-0813">Transport</keyword>
<protein>
    <recommendedName>
        <fullName evidence="4">GDP-mannose transporter GONST3</fullName>
    </recommendedName>
    <alternativeName>
        <fullName evidence="4">Protein GOLGI NUCLEOTIDE SUGAR TRANSPORTER 3</fullName>
    </alternativeName>
</protein>
<organism>
    <name type="scientific">Arabidopsis thaliana</name>
    <name type="common">Mouse-ear cress</name>
    <dbReference type="NCBI Taxonomy" id="3702"/>
    <lineage>
        <taxon>Eukaryota</taxon>
        <taxon>Viridiplantae</taxon>
        <taxon>Streptophyta</taxon>
        <taxon>Embryophyta</taxon>
        <taxon>Tracheophyta</taxon>
        <taxon>Spermatophyta</taxon>
        <taxon>Magnoliopsida</taxon>
        <taxon>eudicotyledons</taxon>
        <taxon>Gunneridae</taxon>
        <taxon>Pentapetalae</taxon>
        <taxon>rosids</taxon>
        <taxon>malvids</taxon>
        <taxon>Brassicales</taxon>
        <taxon>Brassicaceae</taxon>
        <taxon>Camelineae</taxon>
        <taxon>Arabidopsis</taxon>
    </lineage>
</organism>